<gene>
    <name evidence="1" type="primary">rplI</name>
    <name type="ordered locus">Pnec_0431</name>
</gene>
<evidence type="ECO:0000255" key="1">
    <source>
        <dbReference type="HAMAP-Rule" id="MF_00503"/>
    </source>
</evidence>
<evidence type="ECO:0000305" key="2"/>
<accession>B1XTM8</accession>
<sequence length="150" mass="16033">MQIILLEKVTNLGNLGDIVRVKDGFARNFLIPQRKARRATEAAIADFAVRRAELEKLAAEKLAAAEAVGIKLKDMVLEIGQKAGVDGRLFGSVTNHDIADALKAKGFTIEKSSVRLPTGPLKMAGDHPVAVAVHTDVVADITIRVVGEQA</sequence>
<comment type="function">
    <text evidence="1">Binds to the 23S rRNA.</text>
</comment>
<comment type="similarity">
    <text evidence="1">Belongs to the bacterial ribosomal protein bL9 family.</text>
</comment>
<proteinExistence type="inferred from homology"/>
<name>RL9_POLNS</name>
<protein>
    <recommendedName>
        <fullName evidence="1">Large ribosomal subunit protein bL9</fullName>
    </recommendedName>
    <alternativeName>
        <fullName evidence="2">50S ribosomal protein L9</fullName>
    </alternativeName>
</protein>
<dbReference type="EMBL" id="CP001010">
    <property type="protein sequence ID" value="ACB43705.1"/>
    <property type="molecule type" value="Genomic_DNA"/>
</dbReference>
<dbReference type="SMR" id="B1XTM8"/>
<dbReference type="STRING" id="452638.Pnec_0431"/>
<dbReference type="KEGG" id="pne:Pnec_0431"/>
<dbReference type="eggNOG" id="COG0359">
    <property type="taxonomic scope" value="Bacteria"/>
</dbReference>
<dbReference type="HOGENOM" id="CLU_078938_4_1_4"/>
<dbReference type="OrthoDB" id="9788336at2"/>
<dbReference type="GO" id="GO:1990904">
    <property type="term" value="C:ribonucleoprotein complex"/>
    <property type="evidence" value="ECO:0007669"/>
    <property type="project" value="UniProtKB-KW"/>
</dbReference>
<dbReference type="GO" id="GO:0005840">
    <property type="term" value="C:ribosome"/>
    <property type="evidence" value="ECO:0007669"/>
    <property type="project" value="UniProtKB-KW"/>
</dbReference>
<dbReference type="GO" id="GO:0019843">
    <property type="term" value="F:rRNA binding"/>
    <property type="evidence" value="ECO:0007669"/>
    <property type="project" value="UniProtKB-UniRule"/>
</dbReference>
<dbReference type="GO" id="GO:0003735">
    <property type="term" value="F:structural constituent of ribosome"/>
    <property type="evidence" value="ECO:0007669"/>
    <property type="project" value="InterPro"/>
</dbReference>
<dbReference type="GO" id="GO:0006412">
    <property type="term" value="P:translation"/>
    <property type="evidence" value="ECO:0007669"/>
    <property type="project" value="UniProtKB-UniRule"/>
</dbReference>
<dbReference type="Gene3D" id="3.10.430.100">
    <property type="entry name" value="Ribosomal protein L9, C-terminal domain"/>
    <property type="match status" value="1"/>
</dbReference>
<dbReference type="Gene3D" id="3.40.5.10">
    <property type="entry name" value="Ribosomal protein L9, N-terminal domain"/>
    <property type="match status" value="1"/>
</dbReference>
<dbReference type="HAMAP" id="MF_00503">
    <property type="entry name" value="Ribosomal_bL9"/>
    <property type="match status" value="1"/>
</dbReference>
<dbReference type="InterPro" id="IPR000244">
    <property type="entry name" value="Ribosomal_bL9"/>
</dbReference>
<dbReference type="InterPro" id="IPR009027">
    <property type="entry name" value="Ribosomal_bL9/RNase_H1_N"/>
</dbReference>
<dbReference type="InterPro" id="IPR020594">
    <property type="entry name" value="Ribosomal_bL9_bac/chp"/>
</dbReference>
<dbReference type="InterPro" id="IPR020069">
    <property type="entry name" value="Ribosomal_bL9_C"/>
</dbReference>
<dbReference type="InterPro" id="IPR036791">
    <property type="entry name" value="Ribosomal_bL9_C_sf"/>
</dbReference>
<dbReference type="InterPro" id="IPR020070">
    <property type="entry name" value="Ribosomal_bL9_N"/>
</dbReference>
<dbReference type="InterPro" id="IPR036935">
    <property type="entry name" value="Ribosomal_bL9_N_sf"/>
</dbReference>
<dbReference type="NCBIfam" id="TIGR00158">
    <property type="entry name" value="L9"/>
    <property type="match status" value="1"/>
</dbReference>
<dbReference type="PANTHER" id="PTHR21368">
    <property type="entry name" value="50S RIBOSOMAL PROTEIN L9"/>
    <property type="match status" value="1"/>
</dbReference>
<dbReference type="Pfam" id="PF03948">
    <property type="entry name" value="Ribosomal_L9_C"/>
    <property type="match status" value="1"/>
</dbReference>
<dbReference type="Pfam" id="PF01281">
    <property type="entry name" value="Ribosomal_L9_N"/>
    <property type="match status" value="1"/>
</dbReference>
<dbReference type="SUPFAM" id="SSF55658">
    <property type="entry name" value="L9 N-domain-like"/>
    <property type="match status" value="1"/>
</dbReference>
<dbReference type="SUPFAM" id="SSF55653">
    <property type="entry name" value="Ribosomal protein L9 C-domain"/>
    <property type="match status" value="1"/>
</dbReference>
<dbReference type="PROSITE" id="PS00651">
    <property type="entry name" value="RIBOSOMAL_L9"/>
    <property type="match status" value="1"/>
</dbReference>
<feature type="chain" id="PRO_1000126951" description="Large ribosomal subunit protein bL9">
    <location>
        <begin position="1"/>
        <end position="150"/>
    </location>
</feature>
<organism>
    <name type="scientific">Polynucleobacter necessarius subsp. necessarius (strain STIR1)</name>
    <dbReference type="NCBI Taxonomy" id="452638"/>
    <lineage>
        <taxon>Bacteria</taxon>
        <taxon>Pseudomonadati</taxon>
        <taxon>Pseudomonadota</taxon>
        <taxon>Betaproteobacteria</taxon>
        <taxon>Burkholderiales</taxon>
        <taxon>Burkholderiaceae</taxon>
        <taxon>Polynucleobacter</taxon>
    </lineage>
</organism>
<reference key="1">
    <citation type="journal article" date="2013" name="Proc. Natl. Acad. Sci. U.S.A.">
        <title>Polynucleobacter necessarius, a model for genome reduction in both free-living and symbiotic bacteria.</title>
        <authorList>
            <person name="Boscaro V."/>
            <person name="Felletti M."/>
            <person name="Vannini C."/>
            <person name="Ackerman M.S."/>
            <person name="Chain P.S."/>
            <person name="Malfatti S."/>
            <person name="Vergez L.M."/>
            <person name="Shin M."/>
            <person name="Doak T.G."/>
            <person name="Lynch M."/>
            <person name="Petroni G."/>
        </authorList>
    </citation>
    <scope>NUCLEOTIDE SEQUENCE [LARGE SCALE GENOMIC DNA]</scope>
    <source>
        <strain>STIR1</strain>
    </source>
</reference>
<keyword id="KW-0687">Ribonucleoprotein</keyword>
<keyword id="KW-0689">Ribosomal protein</keyword>
<keyword id="KW-0694">RNA-binding</keyword>
<keyword id="KW-0699">rRNA-binding</keyword>